<feature type="chain" id="PRO_1000018629" description="N-(5'-phosphoribosyl)anthranilate isomerase">
    <location>
        <begin position="1"/>
        <end position="222"/>
    </location>
</feature>
<name>TRPF_RHIEC</name>
<gene>
    <name evidence="1" type="primary">trpF</name>
    <name type="ordered locus">RHE_CH00020</name>
</gene>
<reference key="1">
    <citation type="journal article" date="2006" name="Proc. Natl. Acad. Sci. U.S.A.">
        <title>The partitioned Rhizobium etli genome: genetic and metabolic redundancy in seven interacting replicons.</title>
        <authorList>
            <person name="Gonzalez V."/>
            <person name="Santamaria R.I."/>
            <person name="Bustos P."/>
            <person name="Hernandez-Gonzalez I."/>
            <person name="Medrano-Soto A."/>
            <person name="Moreno-Hagelsieb G."/>
            <person name="Janga S.C."/>
            <person name="Ramirez M.A."/>
            <person name="Jimenez-Jacinto V."/>
            <person name="Collado-Vides J."/>
            <person name="Davila G."/>
        </authorList>
    </citation>
    <scope>NUCLEOTIDE SEQUENCE [LARGE SCALE GENOMIC DNA]</scope>
    <source>
        <strain>ATCC 51251 / DSM 11541 / JCM 21823 / NBRC 15573 / CFN 42</strain>
    </source>
</reference>
<protein>
    <recommendedName>
        <fullName evidence="1">N-(5'-phosphoribosyl)anthranilate isomerase</fullName>
        <shortName evidence="1">PRAI</shortName>
        <ecNumber evidence="1">5.3.1.24</ecNumber>
    </recommendedName>
</protein>
<sequence>MKPDIKICGLKTPEAIDRALKRGATHIGFIFFEKSPRYIEPDLAAKLAEPARGKAKIVAVVVDPTNDELDEIVSLLKPDILQLHGNESPEHVLTIKALYGLPVMKVFSVRTADDLKRVEAYIGIADRFLFDAKAPKGSELPGGNGISFDWSLLSWLDGSIDYMLSGGLNKNNVADALVKTRARGIDVSSGVETEPGVKSVAMIDEFFDAVETADAPVMAPGS</sequence>
<dbReference type="EC" id="5.3.1.24" evidence="1"/>
<dbReference type="EMBL" id="CP000133">
    <property type="protein sequence ID" value="ABC88853.1"/>
    <property type="molecule type" value="Genomic_DNA"/>
</dbReference>
<dbReference type="RefSeq" id="WP_011423425.1">
    <property type="nucleotide sequence ID" value="NC_007761.1"/>
</dbReference>
<dbReference type="SMR" id="Q2KE83"/>
<dbReference type="KEGG" id="ret:RHE_CH00020"/>
<dbReference type="eggNOG" id="COG0135">
    <property type="taxonomic scope" value="Bacteria"/>
</dbReference>
<dbReference type="HOGENOM" id="CLU_076364_1_1_5"/>
<dbReference type="OrthoDB" id="9796196at2"/>
<dbReference type="UniPathway" id="UPA00035">
    <property type="reaction ID" value="UER00042"/>
</dbReference>
<dbReference type="Proteomes" id="UP000001936">
    <property type="component" value="Chromosome"/>
</dbReference>
<dbReference type="GO" id="GO:0004640">
    <property type="term" value="F:phosphoribosylanthranilate isomerase activity"/>
    <property type="evidence" value="ECO:0007669"/>
    <property type="project" value="UniProtKB-UniRule"/>
</dbReference>
<dbReference type="GO" id="GO:0000162">
    <property type="term" value="P:L-tryptophan biosynthetic process"/>
    <property type="evidence" value="ECO:0007669"/>
    <property type="project" value="UniProtKB-UniRule"/>
</dbReference>
<dbReference type="CDD" id="cd00405">
    <property type="entry name" value="PRAI"/>
    <property type="match status" value="1"/>
</dbReference>
<dbReference type="Gene3D" id="3.20.20.70">
    <property type="entry name" value="Aldolase class I"/>
    <property type="match status" value="1"/>
</dbReference>
<dbReference type="HAMAP" id="MF_00135">
    <property type="entry name" value="PRAI"/>
    <property type="match status" value="1"/>
</dbReference>
<dbReference type="InterPro" id="IPR013785">
    <property type="entry name" value="Aldolase_TIM"/>
</dbReference>
<dbReference type="InterPro" id="IPR001240">
    <property type="entry name" value="PRAI_dom"/>
</dbReference>
<dbReference type="InterPro" id="IPR011060">
    <property type="entry name" value="RibuloseP-bd_barrel"/>
</dbReference>
<dbReference type="InterPro" id="IPR044643">
    <property type="entry name" value="TrpF_fam"/>
</dbReference>
<dbReference type="NCBIfam" id="NF002295">
    <property type="entry name" value="PRK01222.1-1"/>
    <property type="match status" value="1"/>
</dbReference>
<dbReference type="PANTHER" id="PTHR42894">
    <property type="entry name" value="N-(5'-PHOSPHORIBOSYL)ANTHRANILATE ISOMERASE"/>
    <property type="match status" value="1"/>
</dbReference>
<dbReference type="PANTHER" id="PTHR42894:SF1">
    <property type="entry name" value="N-(5'-PHOSPHORIBOSYL)ANTHRANILATE ISOMERASE"/>
    <property type="match status" value="1"/>
</dbReference>
<dbReference type="Pfam" id="PF00697">
    <property type="entry name" value="PRAI"/>
    <property type="match status" value="1"/>
</dbReference>
<dbReference type="SUPFAM" id="SSF51366">
    <property type="entry name" value="Ribulose-phoshate binding barrel"/>
    <property type="match status" value="1"/>
</dbReference>
<keyword id="KW-0028">Amino-acid biosynthesis</keyword>
<keyword id="KW-0057">Aromatic amino acid biosynthesis</keyword>
<keyword id="KW-0413">Isomerase</keyword>
<keyword id="KW-1185">Reference proteome</keyword>
<keyword id="KW-0822">Tryptophan biosynthesis</keyword>
<evidence type="ECO:0000255" key="1">
    <source>
        <dbReference type="HAMAP-Rule" id="MF_00135"/>
    </source>
</evidence>
<proteinExistence type="inferred from homology"/>
<accession>Q2KE83</accession>
<comment type="catalytic activity">
    <reaction evidence="1">
        <text>N-(5-phospho-beta-D-ribosyl)anthranilate = 1-(2-carboxyphenylamino)-1-deoxy-D-ribulose 5-phosphate</text>
        <dbReference type="Rhea" id="RHEA:21540"/>
        <dbReference type="ChEBI" id="CHEBI:18277"/>
        <dbReference type="ChEBI" id="CHEBI:58613"/>
        <dbReference type="EC" id="5.3.1.24"/>
    </reaction>
</comment>
<comment type="pathway">
    <text evidence="1">Amino-acid biosynthesis; L-tryptophan biosynthesis; L-tryptophan from chorismate: step 3/5.</text>
</comment>
<comment type="similarity">
    <text evidence="1">Belongs to the TrpF family.</text>
</comment>
<organism>
    <name type="scientific">Rhizobium etli (strain ATCC 51251 / DSM 11541 / JCM 21823 / NBRC 15573 / CFN 42)</name>
    <dbReference type="NCBI Taxonomy" id="347834"/>
    <lineage>
        <taxon>Bacteria</taxon>
        <taxon>Pseudomonadati</taxon>
        <taxon>Pseudomonadota</taxon>
        <taxon>Alphaproteobacteria</taxon>
        <taxon>Hyphomicrobiales</taxon>
        <taxon>Rhizobiaceae</taxon>
        <taxon>Rhizobium/Agrobacterium group</taxon>
        <taxon>Rhizobium</taxon>
    </lineage>
</organism>